<organism>
    <name type="scientific">Yersinia pseudotuberculosis serotype IB (strain PB1/+)</name>
    <dbReference type="NCBI Taxonomy" id="502801"/>
    <lineage>
        <taxon>Bacteria</taxon>
        <taxon>Pseudomonadati</taxon>
        <taxon>Pseudomonadota</taxon>
        <taxon>Gammaproteobacteria</taxon>
        <taxon>Enterobacterales</taxon>
        <taxon>Yersiniaceae</taxon>
        <taxon>Yersinia</taxon>
    </lineage>
</organism>
<dbReference type="EMBL" id="CP001048">
    <property type="protein sequence ID" value="ACC87583.1"/>
    <property type="molecule type" value="Genomic_DNA"/>
</dbReference>
<dbReference type="RefSeq" id="WP_011191683.1">
    <property type="nucleotide sequence ID" value="NZ_CP009780.1"/>
</dbReference>
<dbReference type="KEGG" id="ypb:YPTS_0599"/>
<dbReference type="PATRIC" id="fig|502801.10.peg.4277"/>
<dbReference type="GO" id="GO:0005886">
    <property type="term" value="C:plasma membrane"/>
    <property type="evidence" value="ECO:0007669"/>
    <property type="project" value="UniProtKB-SubCell"/>
</dbReference>
<dbReference type="HAMAP" id="MF_01361">
    <property type="entry name" value="UPF0391"/>
    <property type="match status" value="1"/>
</dbReference>
<dbReference type="InterPro" id="IPR009760">
    <property type="entry name" value="DUF1328"/>
</dbReference>
<dbReference type="NCBIfam" id="NF010229">
    <property type="entry name" value="PRK13682.1-4"/>
    <property type="match status" value="1"/>
</dbReference>
<dbReference type="NCBIfam" id="NF010230">
    <property type="entry name" value="PRK13682.1-5"/>
    <property type="match status" value="1"/>
</dbReference>
<dbReference type="Pfam" id="PF07043">
    <property type="entry name" value="DUF1328"/>
    <property type="match status" value="1"/>
</dbReference>
<dbReference type="PIRSF" id="PIRSF036466">
    <property type="entry name" value="UCP036466"/>
    <property type="match status" value="1"/>
</dbReference>
<comment type="subcellular location">
    <subcellularLocation>
        <location evidence="1">Cell membrane</location>
        <topology evidence="1">Multi-pass membrane protein</topology>
    </subcellularLocation>
</comment>
<comment type="similarity">
    <text evidence="1">Belongs to the UPF0391 family.</text>
</comment>
<keyword id="KW-1003">Cell membrane</keyword>
<keyword id="KW-0472">Membrane</keyword>
<keyword id="KW-0812">Transmembrane</keyword>
<keyword id="KW-1133">Transmembrane helix</keyword>
<protein>
    <recommendedName>
        <fullName evidence="1">UPF0391 membrane protein YPTS_0599</fullName>
    </recommendedName>
</protein>
<sequence length="53" mass="5665">MFRWGIIFLIIALIAAALGFGGLAGTAAWAAKVVFVVGIILFLISLFTGRKRL</sequence>
<evidence type="ECO:0000255" key="1">
    <source>
        <dbReference type="HAMAP-Rule" id="MF_01361"/>
    </source>
</evidence>
<feature type="chain" id="PRO_1000143728" description="UPF0391 membrane protein YPTS_0599">
    <location>
        <begin position="1"/>
        <end position="53"/>
    </location>
</feature>
<feature type="transmembrane region" description="Helical" evidence="1">
    <location>
        <begin position="4"/>
        <end position="24"/>
    </location>
</feature>
<feature type="transmembrane region" description="Helical" evidence="1">
    <location>
        <begin position="27"/>
        <end position="47"/>
    </location>
</feature>
<gene>
    <name type="ordered locus">YPTS_0599</name>
</gene>
<proteinExistence type="inferred from homology"/>
<accession>B2K3I4</accession>
<reference key="1">
    <citation type="submission" date="2008-04" db="EMBL/GenBank/DDBJ databases">
        <title>Complete sequence of Yersinia pseudotuberculosis PB1/+.</title>
        <authorList>
            <person name="Copeland A."/>
            <person name="Lucas S."/>
            <person name="Lapidus A."/>
            <person name="Glavina del Rio T."/>
            <person name="Dalin E."/>
            <person name="Tice H."/>
            <person name="Bruce D."/>
            <person name="Goodwin L."/>
            <person name="Pitluck S."/>
            <person name="Munk A.C."/>
            <person name="Brettin T."/>
            <person name="Detter J.C."/>
            <person name="Han C."/>
            <person name="Tapia R."/>
            <person name="Schmutz J."/>
            <person name="Larimer F."/>
            <person name="Land M."/>
            <person name="Hauser L."/>
            <person name="Challacombe J.F."/>
            <person name="Green L."/>
            <person name="Lindler L.E."/>
            <person name="Nikolich M.P."/>
            <person name="Richardson P."/>
        </authorList>
    </citation>
    <scope>NUCLEOTIDE SEQUENCE [LARGE SCALE GENOMIC DNA]</scope>
    <source>
        <strain>PB1/+</strain>
    </source>
</reference>
<name>Y599_YERPB</name>